<proteinExistence type="inferred from homology"/>
<protein>
    <recommendedName>
        <fullName evidence="1">Phosphoenolpyruvate synthase regulatory protein</fullName>
        <shortName evidence="1">PEP synthase regulatory protein</shortName>
        <shortName evidence="1">PSRP</shortName>
        <ecNumber evidence="1">2.7.11.33</ecNumber>
        <ecNumber evidence="1">2.7.4.28</ecNumber>
    </recommendedName>
    <alternativeName>
        <fullName evidence="1">Pyruvate, water dikinase regulatory protein</fullName>
    </alternativeName>
</protein>
<sequence>MDNVVDRHVFYISDGTAITAEVLGHAVMSQFPVTISSITLPFVENESRARAVKDQIDAIYQQTGVRPLVFYSIVLPEIRAIILQSEGFCQDIVQALVAPLQQEMKLDPTPIAHRTHGLNPGNLNKYDARIAAIDYTLAHDDGISLRNLDQAQVILLGVSRCGKTPTSLYLAMQFGIRAANYPFIADDMDNLTLPTSLKPLQHKLFGLTIDPERLAAIREERRENSRYASLRQCRMEVAEVEALYRKNQIPCLNSTNYSVEEIATKILDIMGLNRRMY</sequence>
<reference key="1">
    <citation type="journal article" date="2009" name="BMC Genomics">
        <title>Pseudogene accumulation in the evolutionary histories of Salmonella enterica serovars Paratyphi A and Typhi.</title>
        <authorList>
            <person name="Holt K.E."/>
            <person name="Thomson N.R."/>
            <person name="Wain J."/>
            <person name="Langridge G.C."/>
            <person name="Hasan R."/>
            <person name="Bhutta Z.A."/>
            <person name="Quail M.A."/>
            <person name="Norbertczak H."/>
            <person name="Walker D."/>
            <person name="Simmonds M."/>
            <person name="White B."/>
            <person name="Bason N."/>
            <person name="Mungall K."/>
            <person name="Dougan G."/>
            <person name="Parkhill J."/>
        </authorList>
    </citation>
    <scope>NUCLEOTIDE SEQUENCE [LARGE SCALE GENOMIC DNA]</scope>
    <source>
        <strain>AKU_12601</strain>
    </source>
</reference>
<dbReference type="EC" id="2.7.11.33" evidence="1"/>
<dbReference type="EC" id="2.7.4.28" evidence="1"/>
<dbReference type="EMBL" id="FM200053">
    <property type="protein sequence ID" value="CAR59566.1"/>
    <property type="molecule type" value="Genomic_DNA"/>
</dbReference>
<dbReference type="RefSeq" id="WP_000370992.1">
    <property type="nucleotide sequence ID" value="NC_011147.1"/>
</dbReference>
<dbReference type="SMR" id="B5BA27"/>
<dbReference type="KEGG" id="sek:SSPA1387"/>
<dbReference type="HOGENOM" id="CLU_046206_1_0_6"/>
<dbReference type="Proteomes" id="UP000001869">
    <property type="component" value="Chromosome"/>
</dbReference>
<dbReference type="GO" id="GO:0043531">
    <property type="term" value="F:ADP binding"/>
    <property type="evidence" value="ECO:0007669"/>
    <property type="project" value="UniProtKB-UniRule"/>
</dbReference>
<dbReference type="GO" id="GO:0005524">
    <property type="term" value="F:ATP binding"/>
    <property type="evidence" value="ECO:0007669"/>
    <property type="project" value="InterPro"/>
</dbReference>
<dbReference type="GO" id="GO:0016776">
    <property type="term" value="F:phosphotransferase activity, phosphate group as acceptor"/>
    <property type="evidence" value="ECO:0007669"/>
    <property type="project" value="UniProtKB-UniRule"/>
</dbReference>
<dbReference type="GO" id="GO:0004674">
    <property type="term" value="F:protein serine/threonine kinase activity"/>
    <property type="evidence" value="ECO:0007669"/>
    <property type="project" value="UniProtKB-UniRule"/>
</dbReference>
<dbReference type="HAMAP" id="MF_01062">
    <property type="entry name" value="PSRP"/>
    <property type="match status" value="1"/>
</dbReference>
<dbReference type="InterPro" id="IPR005177">
    <property type="entry name" value="Kinase-pyrophosphorylase"/>
</dbReference>
<dbReference type="InterPro" id="IPR026530">
    <property type="entry name" value="PSRP"/>
</dbReference>
<dbReference type="NCBIfam" id="NF003742">
    <property type="entry name" value="PRK05339.1"/>
    <property type="match status" value="1"/>
</dbReference>
<dbReference type="PANTHER" id="PTHR31756">
    <property type="entry name" value="PYRUVATE, PHOSPHATE DIKINASE REGULATORY PROTEIN 1, CHLOROPLASTIC"/>
    <property type="match status" value="1"/>
</dbReference>
<dbReference type="PANTHER" id="PTHR31756:SF3">
    <property type="entry name" value="PYRUVATE, PHOSPHATE DIKINASE REGULATORY PROTEIN 1, CHLOROPLASTIC"/>
    <property type="match status" value="1"/>
</dbReference>
<dbReference type="Pfam" id="PF03618">
    <property type="entry name" value="Kinase-PPPase"/>
    <property type="match status" value="1"/>
</dbReference>
<evidence type="ECO:0000255" key="1">
    <source>
        <dbReference type="HAMAP-Rule" id="MF_01062"/>
    </source>
</evidence>
<comment type="function">
    <text evidence="1">Bifunctional serine/threonine kinase and phosphorylase involved in the regulation of the phosphoenolpyruvate synthase (PEPS) by catalyzing its phosphorylation/dephosphorylation.</text>
</comment>
<comment type="catalytic activity">
    <reaction evidence="1">
        <text>[pyruvate, water dikinase] + ADP = [pyruvate, water dikinase]-phosphate + AMP + H(+)</text>
        <dbReference type="Rhea" id="RHEA:46020"/>
        <dbReference type="Rhea" id="RHEA-COMP:11425"/>
        <dbReference type="Rhea" id="RHEA-COMP:11426"/>
        <dbReference type="ChEBI" id="CHEBI:15378"/>
        <dbReference type="ChEBI" id="CHEBI:43176"/>
        <dbReference type="ChEBI" id="CHEBI:68546"/>
        <dbReference type="ChEBI" id="CHEBI:456215"/>
        <dbReference type="ChEBI" id="CHEBI:456216"/>
        <dbReference type="EC" id="2.7.11.33"/>
    </reaction>
</comment>
<comment type="catalytic activity">
    <reaction evidence="1">
        <text>[pyruvate, water dikinase]-phosphate + phosphate + H(+) = [pyruvate, water dikinase] + diphosphate</text>
        <dbReference type="Rhea" id="RHEA:48580"/>
        <dbReference type="Rhea" id="RHEA-COMP:11425"/>
        <dbReference type="Rhea" id="RHEA-COMP:11426"/>
        <dbReference type="ChEBI" id="CHEBI:15378"/>
        <dbReference type="ChEBI" id="CHEBI:33019"/>
        <dbReference type="ChEBI" id="CHEBI:43176"/>
        <dbReference type="ChEBI" id="CHEBI:43474"/>
        <dbReference type="ChEBI" id="CHEBI:68546"/>
        <dbReference type="EC" id="2.7.4.28"/>
    </reaction>
</comment>
<comment type="similarity">
    <text evidence="1">Belongs to the pyruvate, phosphate/water dikinase regulatory protein family. PSRP subfamily.</text>
</comment>
<feature type="chain" id="PRO_1000136494" description="Phosphoenolpyruvate synthase regulatory protein">
    <location>
        <begin position="1"/>
        <end position="277"/>
    </location>
</feature>
<feature type="binding site" evidence="1">
    <location>
        <begin position="157"/>
        <end position="164"/>
    </location>
    <ligand>
        <name>ADP</name>
        <dbReference type="ChEBI" id="CHEBI:456216"/>
    </ligand>
</feature>
<organism>
    <name type="scientific">Salmonella paratyphi A (strain AKU_12601)</name>
    <dbReference type="NCBI Taxonomy" id="554290"/>
    <lineage>
        <taxon>Bacteria</taxon>
        <taxon>Pseudomonadati</taxon>
        <taxon>Pseudomonadota</taxon>
        <taxon>Gammaproteobacteria</taxon>
        <taxon>Enterobacterales</taxon>
        <taxon>Enterobacteriaceae</taxon>
        <taxon>Salmonella</taxon>
    </lineage>
</organism>
<gene>
    <name evidence="1" type="primary">ppsR</name>
    <name type="ordered locus">SSPA1387</name>
</gene>
<accession>B5BA27</accession>
<keyword id="KW-0418">Kinase</keyword>
<keyword id="KW-0547">Nucleotide-binding</keyword>
<keyword id="KW-0723">Serine/threonine-protein kinase</keyword>
<keyword id="KW-0808">Transferase</keyword>
<name>PSRP_SALPK</name>